<name>PUR5_METAC</name>
<dbReference type="EC" id="6.3.3.1" evidence="1"/>
<dbReference type="EMBL" id="AE010299">
    <property type="protein sequence ID" value="AAM03584.1"/>
    <property type="status" value="ALT_INIT"/>
    <property type="molecule type" value="Genomic_DNA"/>
</dbReference>
<dbReference type="RefSeq" id="WP_048066059.1">
    <property type="nucleotide sequence ID" value="NC_003552.1"/>
</dbReference>
<dbReference type="SMR" id="Q8TUD7"/>
<dbReference type="FunCoup" id="Q8TUD7">
    <property type="interactions" value="129"/>
</dbReference>
<dbReference type="STRING" id="188937.MA_0130"/>
<dbReference type="EnsemblBacteria" id="AAM03584">
    <property type="protein sequence ID" value="AAM03584"/>
    <property type="gene ID" value="MA_0130"/>
</dbReference>
<dbReference type="GeneID" id="1472022"/>
<dbReference type="KEGG" id="mac:MA_0130"/>
<dbReference type="HOGENOM" id="CLU_047116_0_0_2"/>
<dbReference type="InParanoid" id="Q8TUD7"/>
<dbReference type="OrthoDB" id="6605at2157"/>
<dbReference type="PhylomeDB" id="Q8TUD7"/>
<dbReference type="UniPathway" id="UPA00074">
    <property type="reaction ID" value="UER00129"/>
</dbReference>
<dbReference type="Proteomes" id="UP000002487">
    <property type="component" value="Chromosome"/>
</dbReference>
<dbReference type="GO" id="GO:0005829">
    <property type="term" value="C:cytosol"/>
    <property type="evidence" value="ECO:0000318"/>
    <property type="project" value="GO_Central"/>
</dbReference>
<dbReference type="GO" id="GO:0005524">
    <property type="term" value="F:ATP binding"/>
    <property type="evidence" value="ECO:0007669"/>
    <property type="project" value="UniProtKB-KW"/>
</dbReference>
<dbReference type="GO" id="GO:0004637">
    <property type="term" value="F:phosphoribosylamine-glycine ligase activity"/>
    <property type="evidence" value="ECO:0000318"/>
    <property type="project" value="GO_Central"/>
</dbReference>
<dbReference type="GO" id="GO:0004641">
    <property type="term" value="F:phosphoribosylformylglycinamidine cyclo-ligase activity"/>
    <property type="evidence" value="ECO:0000318"/>
    <property type="project" value="GO_Central"/>
</dbReference>
<dbReference type="GO" id="GO:0006189">
    <property type="term" value="P:'de novo' IMP biosynthetic process"/>
    <property type="evidence" value="ECO:0007669"/>
    <property type="project" value="UniProtKB-UniRule"/>
</dbReference>
<dbReference type="GO" id="GO:0046084">
    <property type="term" value="P:adenine biosynthetic process"/>
    <property type="evidence" value="ECO:0000318"/>
    <property type="project" value="GO_Central"/>
</dbReference>
<dbReference type="GO" id="GO:0006164">
    <property type="term" value="P:purine nucleotide biosynthetic process"/>
    <property type="evidence" value="ECO:0000318"/>
    <property type="project" value="GO_Central"/>
</dbReference>
<dbReference type="CDD" id="cd02196">
    <property type="entry name" value="PurM"/>
    <property type="match status" value="1"/>
</dbReference>
<dbReference type="FunFam" id="3.30.1330.10:FF:000020">
    <property type="entry name" value="Phosphoribosylformylglycinamidine cyclo-ligase"/>
    <property type="match status" value="1"/>
</dbReference>
<dbReference type="FunFam" id="3.90.650.10:FF:000011">
    <property type="entry name" value="Phosphoribosylformylglycinamidine cyclo-ligase"/>
    <property type="match status" value="1"/>
</dbReference>
<dbReference type="Gene3D" id="3.90.650.10">
    <property type="entry name" value="PurM-like C-terminal domain"/>
    <property type="match status" value="1"/>
</dbReference>
<dbReference type="Gene3D" id="3.30.1330.10">
    <property type="entry name" value="PurM-like, N-terminal domain"/>
    <property type="match status" value="1"/>
</dbReference>
<dbReference type="HAMAP" id="MF_00741">
    <property type="entry name" value="AIRS"/>
    <property type="match status" value="1"/>
</dbReference>
<dbReference type="InterPro" id="IPR010918">
    <property type="entry name" value="PurM-like_C_dom"/>
</dbReference>
<dbReference type="InterPro" id="IPR036676">
    <property type="entry name" value="PurM-like_C_sf"/>
</dbReference>
<dbReference type="InterPro" id="IPR016188">
    <property type="entry name" value="PurM-like_N"/>
</dbReference>
<dbReference type="InterPro" id="IPR036921">
    <property type="entry name" value="PurM-like_N_sf"/>
</dbReference>
<dbReference type="InterPro" id="IPR004733">
    <property type="entry name" value="PurM_cligase"/>
</dbReference>
<dbReference type="NCBIfam" id="TIGR00878">
    <property type="entry name" value="purM"/>
    <property type="match status" value="1"/>
</dbReference>
<dbReference type="PANTHER" id="PTHR10520:SF12">
    <property type="entry name" value="TRIFUNCTIONAL PURINE BIOSYNTHETIC PROTEIN ADENOSINE-3"/>
    <property type="match status" value="1"/>
</dbReference>
<dbReference type="PANTHER" id="PTHR10520">
    <property type="entry name" value="TRIFUNCTIONAL PURINE BIOSYNTHETIC PROTEIN ADENOSINE-3-RELATED"/>
    <property type="match status" value="1"/>
</dbReference>
<dbReference type="Pfam" id="PF00586">
    <property type="entry name" value="AIRS"/>
    <property type="match status" value="1"/>
</dbReference>
<dbReference type="Pfam" id="PF02769">
    <property type="entry name" value="AIRS_C"/>
    <property type="match status" value="1"/>
</dbReference>
<dbReference type="SUPFAM" id="SSF56042">
    <property type="entry name" value="PurM C-terminal domain-like"/>
    <property type="match status" value="1"/>
</dbReference>
<dbReference type="SUPFAM" id="SSF55326">
    <property type="entry name" value="PurM N-terminal domain-like"/>
    <property type="match status" value="1"/>
</dbReference>
<sequence length="333" mass="36098">MSEKHLTYADSGVDITKEEKTVKTLIDKLSYVRKGIGAPLTGIGHYAGLLDFGEYALAMTTDGVGSKVLIANEMKRWNTVGIDCIAMNVNDLLAIGAEPVAFVDYLALEKHEEGFAAQIGEGLLKGAEISRMSIVGGETATLPDIIKGFDLAGTCLGVVKKEDILEGGKVRVGDVLVGIPSTGVHSNGYTLVRKIIEKSGYSYHDPCPYDSSKTIGDELLEPTRIYIEVLDVLKACEVHGLAHITGSGLLKLRRVTKLGFEFSDPIEPQEIFKFLQKEGEVEDLEMYRTFNMGMGFLMILPEKDAAKAAELTGGKIVGKIVESGIRVKDLIIE</sequence>
<organism>
    <name type="scientific">Methanosarcina acetivorans (strain ATCC 35395 / DSM 2834 / JCM 12185 / C2A)</name>
    <dbReference type="NCBI Taxonomy" id="188937"/>
    <lineage>
        <taxon>Archaea</taxon>
        <taxon>Methanobacteriati</taxon>
        <taxon>Methanobacteriota</taxon>
        <taxon>Stenosarchaea group</taxon>
        <taxon>Methanomicrobia</taxon>
        <taxon>Methanosarcinales</taxon>
        <taxon>Methanosarcinaceae</taxon>
        <taxon>Methanosarcina</taxon>
    </lineage>
</organism>
<reference key="1">
    <citation type="journal article" date="2002" name="Genome Res.">
        <title>The genome of Methanosarcina acetivorans reveals extensive metabolic and physiological diversity.</title>
        <authorList>
            <person name="Galagan J.E."/>
            <person name="Nusbaum C."/>
            <person name="Roy A."/>
            <person name="Endrizzi M.G."/>
            <person name="Macdonald P."/>
            <person name="FitzHugh W."/>
            <person name="Calvo S."/>
            <person name="Engels R."/>
            <person name="Smirnov S."/>
            <person name="Atnoor D."/>
            <person name="Brown A."/>
            <person name="Allen N."/>
            <person name="Naylor J."/>
            <person name="Stange-Thomann N."/>
            <person name="DeArellano K."/>
            <person name="Johnson R."/>
            <person name="Linton L."/>
            <person name="McEwan P."/>
            <person name="McKernan K."/>
            <person name="Talamas J."/>
            <person name="Tirrell A."/>
            <person name="Ye W."/>
            <person name="Zimmer A."/>
            <person name="Barber R.D."/>
            <person name="Cann I."/>
            <person name="Graham D.E."/>
            <person name="Grahame D.A."/>
            <person name="Guss A.M."/>
            <person name="Hedderich R."/>
            <person name="Ingram-Smith C."/>
            <person name="Kuettner H.C."/>
            <person name="Krzycki J.A."/>
            <person name="Leigh J.A."/>
            <person name="Li W."/>
            <person name="Liu J."/>
            <person name="Mukhopadhyay B."/>
            <person name="Reeve J.N."/>
            <person name="Smith K."/>
            <person name="Springer T.A."/>
            <person name="Umayam L.A."/>
            <person name="White O."/>
            <person name="White R.H."/>
            <person name="de Macario E.C."/>
            <person name="Ferry J.G."/>
            <person name="Jarrell K.F."/>
            <person name="Jing H."/>
            <person name="Macario A.J.L."/>
            <person name="Paulsen I.T."/>
            <person name="Pritchett M."/>
            <person name="Sowers K.R."/>
            <person name="Swanson R.V."/>
            <person name="Zinder S.H."/>
            <person name="Lander E."/>
            <person name="Metcalf W.W."/>
            <person name="Birren B."/>
        </authorList>
    </citation>
    <scope>NUCLEOTIDE SEQUENCE [LARGE SCALE GENOMIC DNA]</scope>
    <source>
        <strain>ATCC 35395 / DSM 2834 / JCM 12185 / C2A</strain>
    </source>
</reference>
<protein>
    <recommendedName>
        <fullName evidence="1">Phosphoribosylformylglycinamidine cyclo-ligase</fullName>
        <ecNumber evidence="1">6.3.3.1</ecNumber>
    </recommendedName>
    <alternativeName>
        <fullName evidence="1">AIR synthase</fullName>
    </alternativeName>
    <alternativeName>
        <fullName evidence="1">AIRS</fullName>
    </alternativeName>
    <alternativeName>
        <fullName evidence="1">Phosphoribosyl-aminoimidazole synthetase</fullName>
    </alternativeName>
</protein>
<proteinExistence type="inferred from homology"/>
<gene>
    <name evidence="1" type="primary">purM</name>
    <name type="ordered locus">MA_0130</name>
</gene>
<accession>Q8TUD7</accession>
<keyword id="KW-0067">ATP-binding</keyword>
<keyword id="KW-0963">Cytoplasm</keyword>
<keyword id="KW-0436">Ligase</keyword>
<keyword id="KW-0547">Nucleotide-binding</keyword>
<keyword id="KW-0658">Purine biosynthesis</keyword>
<keyword id="KW-1185">Reference proteome</keyword>
<comment type="catalytic activity">
    <reaction evidence="1">
        <text>2-formamido-N(1)-(5-O-phospho-beta-D-ribosyl)acetamidine + ATP = 5-amino-1-(5-phospho-beta-D-ribosyl)imidazole + ADP + phosphate + H(+)</text>
        <dbReference type="Rhea" id="RHEA:23032"/>
        <dbReference type="ChEBI" id="CHEBI:15378"/>
        <dbReference type="ChEBI" id="CHEBI:30616"/>
        <dbReference type="ChEBI" id="CHEBI:43474"/>
        <dbReference type="ChEBI" id="CHEBI:137981"/>
        <dbReference type="ChEBI" id="CHEBI:147287"/>
        <dbReference type="ChEBI" id="CHEBI:456216"/>
        <dbReference type="EC" id="6.3.3.1"/>
    </reaction>
</comment>
<comment type="pathway">
    <text evidence="1">Purine metabolism; IMP biosynthesis via de novo pathway; 5-amino-1-(5-phospho-D-ribosyl)imidazole from N(2)-formyl-N(1)-(5-phospho-D-ribosyl)glycinamide: step 2/2.</text>
</comment>
<comment type="subcellular location">
    <subcellularLocation>
        <location evidence="1">Cytoplasm</location>
    </subcellularLocation>
</comment>
<comment type="similarity">
    <text evidence="1">Belongs to the AIR synthase family.</text>
</comment>
<comment type="sequence caution" evidence="2">
    <conflict type="erroneous initiation">
        <sequence resource="EMBL-CDS" id="AAM03584"/>
    </conflict>
</comment>
<evidence type="ECO:0000255" key="1">
    <source>
        <dbReference type="HAMAP-Rule" id="MF_00741"/>
    </source>
</evidence>
<evidence type="ECO:0000305" key="2"/>
<feature type="chain" id="PRO_0000148280" description="Phosphoribosylformylglycinamidine cyclo-ligase">
    <location>
        <begin position="1"/>
        <end position="333"/>
    </location>
</feature>